<protein>
    <recommendedName>
        <fullName>Genetic interactor of prohibitin 7, mitochondrial</fullName>
    </recommendedName>
</protein>
<comment type="function">
    <text evidence="1">Involved in respiratory growth and required for cell survival in the absence of prohibitins or GEM1.</text>
</comment>
<comment type="subcellular location">
    <subcellularLocation>
        <location evidence="1">Mitochondrion membrane</location>
        <topology evidence="1">Single-pass membrane protein</topology>
    </subcellularLocation>
</comment>
<comment type="similarity">
    <text evidence="3">Belongs to the GEP7 family.</text>
</comment>
<keyword id="KW-0472">Membrane</keyword>
<keyword id="KW-0496">Mitochondrion</keyword>
<keyword id="KW-0809">Transit peptide</keyword>
<keyword id="KW-0812">Transmembrane</keyword>
<keyword id="KW-1133">Transmembrane helix</keyword>
<accession>B3LHC6</accession>
<evidence type="ECO:0000250" key="1"/>
<evidence type="ECO:0000255" key="2"/>
<evidence type="ECO:0000305" key="3"/>
<name>GEP7_YEAS1</name>
<proteinExistence type="inferred from homology"/>
<gene>
    <name type="primary">GEP7</name>
    <name type="ORF">SCRG_01059</name>
</gene>
<reference key="1">
    <citation type="submission" date="2005-03" db="EMBL/GenBank/DDBJ databases">
        <title>Annotation of the Saccharomyces cerevisiae RM11-1a genome.</title>
        <authorList>
            <consortium name="The Broad Institute Genome Sequencing Platform"/>
            <person name="Birren B.W."/>
            <person name="Lander E.S."/>
            <person name="Galagan J.E."/>
            <person name="Nusbaum C."/>
            <person name="Devon K."/>
            <person name="Cuomo C."/>
            <person name="Jaffe D.B."/>
            <person name="Butler J."/>
            <person name="Alvarez P."/>
            <person name="Gnerre S."/>
            <person name="Grabherr M."/>
            <person name="Kleber M."/>
            <person name="Mauceli E.W."/>
            <person name="Brockman W."/>
            <person name="MacCallum I.A."/>
            <person name="Rounsley S."/>
            <person name="Young S.K."/>
            <person name="LaButti K."/>
            <person name="Pushparaj V."/>
            <person name="DeCaprio D."/>
            <person name="Crawford M."/>
            <person name="Koehrsen M."/>
            <person name="Engels R."/>
            <person name="Montgomery P."/>
            <person name="Pearson M."/>
            <person name="Howarth C."/>
            <person name="Larson L."/>
            <person name="Luoma S."/>
            <person name="White J."/>
            <person name="O'Leary S."/>
            <person name="Kodira C.D."/>
            <person name="Zeng Q."/>
            <person name="Yandava C."/>
            <person name="Alvarado L."/>
            <person name="Pratt S."/>
            <person name="Kruglyak L."/>
        </authorList>
    </citation>
    <scope>NUCLEOTIDE SEQUENCE [LARGE SCALE GENOMIC DNA]</scope>
    <source>
        <strain>RM11-1a</strain>
    </source>
</reference>
<organism>
    <name type="scientific">Saccharomyces cerevisiae (strain RM11-1a)</name>
    <name type="common">Baker's yeast</name>
    <dbReference type="NCBI Taxonomy" id="285006"/>
    <lineage>
        <taxon>Eukaryota</taxon>
        <taxon>Fungi</taxon>
        <taxon>Dikarya</taxon>
        <taxon>Ascomycota</taxon>
        <taxon>Saccharomycotina</taxon>
        <taxon>Saccharomycetes</taxon>
        <taxon>Saccharomycetales</taxon>
        <taxon>Saccharomycetaceae</taxon>
        <taxon>Saccharomyces</taxon>
    </lineage>
</organism>
<dbReference type="EMBL" id="CH408044">
    <property type="protein sequence ID" value="EDV10284.1"/>
    <property type="molecule type" value="Genomic_DNA"/>
</dbReference>
<dbReference type="HOGENOM" id="CLU_064141_0_0_1"/>
<dbReference type="OrthoDB" id="41474at4893"/>
<dbReference type="Proteomes" id="UP000008335">
    <property type="component" value="Unassembled WGS sequence"/>
</dbReference>
<dbReference type="GO" id="GO:0031966">
    <property type="term" value="C:mitochondrial membrane"/>
    <property type="evidence" value="ECO:0007669"/>
    <property type="project" value="UniProtKB-SubCell"/>
</dbReference>
<feature type="transit peptide" description="Mitochondrion" evidence="2">
    <location>
        <begin position="1"/>
        <end position="24"/>
    </location>
</feature>
<feature type="chain" id="PRO_0000399740" description="Genetic interactor of prohibitin 7, mitochondrial">
    <location>
        <begin position="25"/>
        <end position="287"/>
    </location>
</feature>
<feature type="transmembrane region" description="Helical" evidence="2">
    <location>
        <begin position="250"/>
        <end position="266"/>
    </location>
</feature>
<sequence length="287" mass="32959">MVLSNVKIFRLKSHRAFRIGPMIKAVAGNLLVKRFYQPKLERIPPASLLLKQKIRLAQNGSTTSTENPISFSQTMSEIFSVLQPSAPDLDEDETSGLKRDHLLTERLNNGELGVIMNKFFNPSSTHNNQLIDTNILLQNFPKLSGNDLDLLDFAINEKMRGNWNDLKQDFIQLWYYKSFGFLGPRTQFVLTNSSPSLRSQFLKLPFIEYNWFLLQNNKNANILPADVQNVVKVFHLDDKRFSWKSIDPFSKAIISFVVFVSIYVWLDESAKQKTKELPAQKSTVISE</sequence>